<sequence length="320" mass="35550">MKTESEVGHHMASSTLNVDAFRDYLETQLKRLPPLPDVEQISPRVIRVLGQNPGEFTLQGTNTYIVGTGRSRLIIDTGQGSPQWIENVVFLLESMGIILSHVLLTHWHGDHTGGVADLIKSYPHLTTAIYKNSPARDQNNIIDGQSFSVEGATVRALHTPGHAHDHMCFVLVEENAMFTGDNILGHGTTAVEELGPIMSSWRRMLTENCERGYPGHGQLIHNLNHKITEQLASKVRRENLVLDALRCIRGQQGPQMAGRRMSINPKQLVILVHGKGINENVSTLVLEPFLIETLRKLAADGIVGFEICNGEKRWFPVQTV</sequence>
<organism>
    <name type="scientific">Pestalotiopsis microspora</name>
    <dbReference type="NCBI Taxonomy" id="85828"/>
    <lineage>
        <taxon>Eukaryota</taxon>
        <taxon>Fungi</taxon>
        <taxon>Dikarya</taxon>
        <taxon>Ascomycota</taxon>
        <taxon>Pezizomycotina</taxon>
        <taxon>Sordariomycetes</taxon>
        <taxon>Xylariomycetidae</taxon>
        <taxon>Amphisphaeriales</taxon>
        <taxon>Sporocadaceae</taxon>
        <taxon>Pestalotiopsis</taxon>
    </lineage>
</organism>
<proteinExistence type="evidence at transcript level"/>
<name>GME57_PESMI</name>
<feature type="chain" id="PRO_0000456739" description="Lactamase-like protein GME11357">
    <location>
        <begin position="1"/>
        <end position="320"/>
    </location>
</feature>
<feature type="active site" description="Proton donor/acceptor" evidence="2">
    <location>
        <position position="110"/>
    </location>
</feature>
<feature type="binding site" evidence="1">
    <location>
        <position position="106"/>
    </location>
    <ligand>
        <name>Zn(2+)</name>
        <dbReference type="ChEBI" id="CHEBI:29105"/>
        <label>1</label>
        <note>catalytic</note>
    </ligand>
</feature>
<feature type="binding site" evidence="1">
    <location>
        <position position="108"/>
    </location>
    <ligand>
        <name>Zn(2+)</name>
        <dbReference type="ChEBI" id="CHEBI:29105"/>
        <label>1</label>
        <note>catalytic</note>
    </ligand>
</feature>
<feature type="binding site" evidence="1">
    <location>
        <position position="110"/>
    </location>
    <ligand>
        <name>Zn(2+)</name>
        <dbReference type="ChEBI" id="CHEBI:29105"/>
        <label>2</label>
        <note>catalytic</note>
    </ligand>
</feature>
<feature type="binding site" evidence="1">
    <location>
        <position position="111"/>
    </location>
    <ligand>
        <name>Zn(2+)</name>
        <dbReference type="ChEBI" id="CHEBI:29105"/>
        <label>2</label>
        <note>catalytic</note>
    </ligand>
</feature>
<protein>
    <recommendedName>
        <fullName evidence="5">Lactamase-like protein GME11357</fullName>
        <ecNumber evidence="7">3.1.2.-</ecNumber>
    </recommendedName>
    <alternativeName>
        <fullName evidence="5">Dibenzodioxocinones biosynthesis cluster protein GME11357</fullName>
    </alternativeName>
</protein>
<reference key="1">
    <citation type="journal article" date="2019" name="J. Microbiol. Biotechnol.">
        <title>A gene cluster for the biosynthesis of dibenzodioxocinons in the endophyte Pestalotiopsis microspora, a taxol producer.</title>
        <authorList>
            <person name="Liu Y."/>
            <person name="Chen L."/>
            <person name="Xie Q."/>
            <person name="Yu X."/>
            <person name="Duan A."/>
            <person name="Lin Y."/>
            <person name="Xiang B."/>
            <person name="Hao X."/>
            <person name="Chen W."/>
            <person name="Zhu X."/>
        </authorList>
    </citation>
    <scope>NUCLEOTIDE SEQUENCE [MRNA]</scope>
    <scope>FUNCTION</scope>
    <scope>PATHWAY</scope>
    <source>
        <strain>NK17</strain>
    </source>
</reference>
<reference key="2">
    <citation type="journal article" date="2022" name="Microbiol. Res.">
        <title>Acquiring novel chemicals by overexpression of a transcription factor DibT in the dibenzodioxocinone biosynthetic cluster in Pestalotiopsis microspora.</title>
        <authorList>
            <person name="Liu Y."/>
            <person name="Fu Y."/>
            <person name="Zhou M."/>
            <person name="Hao X."/>
            <person name="Zhang P."/>
            <person name="Zhu X."/>
        </authorList>
    </citation>
    <scope>INDUCTION</scope>
</reference>
<accession>A0A5B8YUX5</accession>
<comment type="function">
    <text evidence="3 7">Lactamase-like protein; part of the gene cluster that mediates the biosynthesis of dibenzodioxocinones such as pestalotiollide B, a novel class of inhibitors against cholesterol ester transfer protein (CEPT) (PubMed:31474098). The biosynthesis initiates from condensation of acetate and malonate units catalyzed by the non-reducing PKS pks8/GME11356. Pks8/GME11356 lacks a thioesterase (TE) domain, which is important to the cyclizing of the third ring of atrochrysone carboxylic acid, and the esterase GME11355 might play the role of TE and catalyzes the cyclization reaction of the C ring. The lactamase-like protein GME11357 (or other beta-lactamases in Pestalotiopsis microspora) probably hydrolyzes the thioester bond between the ACP of pks8/GME11356 and the intermediate to release atrochrysone carboxylic acid, which is spontaneously dehydrates to form endocrocin anthrone. Endocrocin anthrone is further converted to emodin via the endocrocin intermediate. Emodin is then oxidized by several enzymes such as the Baeyer-Villiger oxidase GME11358, the oxidoreductase GME11367, the short chain dehydrogenase/reductase GME11373, as well as by other oxidoreductases from the cluster, to modify the A and C rings and open the B ring, and finally yield monodictyphenone. The prenyltransferase GME11375 may catalyze the addition reaction between the C5 side chains and the carbon bone of dibenzodioxocinones. The remaining biochemical reactions to the final product dibenzodioxocinones should be methylation catalyzed by methyltransferase GME11366 and reduction and lactonization reaction catalyzed by a series of oxidordeuctases (Probable).</text>
</comment>
<comment type="cofactor">
    <cofactor evidence="1">
        <name>Zn(2+)</name>
        <dbReference type="ChEBI" id="CHEBI:29105"/>
    </cofactor>
    <text evidence="1">Binds 2 Zn(2+) ions per subunit.</text>
</comment>
<comment type="pathway">
    <text evidence="7">Secondary metabolite biosynthesis.</text>
</comment>
<comment type="induction">
    <text evidence="4">The expression of the dibenzodioxocinones biosynthesis cluster is positively regulated by the transcription factor dibT.</text>
</comment>
<comment type="similarity">
    <text evidence="6">Belongs to the metallo-beta-lactamase superfamily.</text>
</comment>
<keyword id="KW-0378">Hydrolase</keyword>
<keyword id="KW-0479">Metal-binding</keyword>
<keyword id="KW-0862">Zinc</keyword>
<gene>
    <name evidence="5" type="ORF">GME11357</name>
</gene>
<dbReference type="EC" id="3.1.2.-" evidence="7"/>
<dbReference type="EMBL" id="MK590976">
    <property type="protein sequence ID" value="QED41488.1"/>
    <property type="molecule type" value="mRNA"/>
</dbReference>
<dbReference type="SMR" id="A0A5B8YUX5"/>
<dbReference type="GO" id="GO:0016787">
    <property type="term" value="F:hydrolase activity"/>
    <property type="evidence" value="ECO:0007669"/>
    <property type="project" value="UniProtKB-KW"/>
</dbReference>
<dbReference type="GO" id="GO:0046872">
    <property type="term" value="F:metal ion binding"/>
    <property type="evidence" value="ECO:0007669"/>
    <property type="project" value="UniProtKB-KW"/>
</dbReference>
<dbReference type="GO" id="GO:0044550">
    <property type="term" value="P:secondary metabolite biosynthetic process"/>
    <property type="evidence" value="ECO:0007669"/>
    <property type="project" value="TreeGrafter"/>
</dbReference>
<dbReference type="CDD" id="cd07722">
    <property type="entry name" value="LACTB2-like_MBL-fold"/>
    <property type="match status" value="1"/>
</dbReference>
<dbReference type="FunFam" id="3.60.15.10:FF:000041">
    <property type="entry name" value="Metallo-beta-lactamase domain protein"/>
    <property type="match status" value="1"/>
</dbReference>
<dbReference type="Gene3D" id="3.60.15.10">
    <property type="entry name" value="Ribonuclease Z/Hydroxyacylglutathione hydrolase-like"/>
    <property type="match status" value="1"/>
</dbReference>
<dbReference type="InterPro" id="IPR047921">
    <property type="entry name" value="LACTB2-like_MBL-fold"/>
</dbReference>
<dbReference type="InterPro" id="IPR001279">
    <property type="entry name" value="Metallo-B-lactamas"/>
</dbReference>
<dbReference type="InterPro" id="IPR036866">
    <property type="entry name" value="RibonucZ/Hydroxyglut_hydro"/>
</dbReference>
<dbReference type="InterPro" id="IPR050662">
    <property type="entry name" value="Sec-metab_biosynth-thioest"/>
</dbReference>
<dbReference type="PANTHER" id="PTHR23131:SF3">
    <property type="entry name" value="ATROCHRYSONE CARBOXYL ACP THIOESTERASE"/>
    <property type="match status" value="1"/>
</dbReference>
<dbReference type="PANTHER" id="PTHR23131">
    <property type="entry name" value="ENDORIBONUCLEASE LACTB2"/>
    <property type="match status" value="1"/>
</dbReference>
<dbReference type="Pfam" id="PF00753">
    <property type="entry name" value="Lactamase_B"/>
    <property type="match status" value="1"/>
</dbReference>
<dbReference type="SMART" id="SM00849">
    <property type="entry name" value="Lactamase_B"/>
    <property type="match status" value="1"/>
</dbReference>
<dbReference type="SUPFAM" id="SSF56281">
    <property type="entry name" value="Metallo-hydrolase/oxidoreductase"/>
    <property type="match status" value="1"/>
</dbReference>
<evidence type="ECO:0000250" key="1">
    <source>
        <dbReference type="UniProtKB" id="Q988B9"/>
    </source>
</evidence>
<evidence type="ECO:0000255" key="2"/>
<evidence type="ECO:0000269" key="3">
    <source>
    </source>
</evidence>
<evidence type="ECO:0000269" key="4">
    <source>
    </source>
</evidence>
<evidence type="ECO:0000303" key="5">
    <source>
    </source>
</evidence>
<evidence type="ECO:0000305" key="6"/>
<evidence type="ECO:0000305" key="7">
    <source>
    </source>
</evidence>